<sequence>MKITLIIPTYNAGSLWPNVLDAIKQQTIYPDKLIVIDSGSKDETVPLASDLKNISIFNIDSKDFNHGGTRNLAVAKTLDADVIIFLTQDAILADSDAIKNLVYYFSDPLIAAVCGRQLPHKDANPLAVHARNFNYSSKSIVKSKADIEKLGIKTVFMSNSFAAYRRSVFEELSGFPEHTILAEDMFMAAKMIQAGYKVAYCAEAVVRHSHNYTPREEFQRYFDTGVFHACSPWIQRDFGGAGGEGFRFVKSEIQFLLKNAPFWIPRALLTTFAKFLGYKLGKHWQSLPLSTCRYFSMYKSYWNNIQYSSSKEIK</sequence>
<gene>
    <name evidence="2" type="primary">rfbN</name>
    <name evidence="4" type="ordered locus">STM2085</name>
</gene>
<keyword id="KW-0328">Glycosyltransferase</keyword>
<keyword id="KW-0448">Lipopolysaccharide biosynthesis</keyword>
<keyword id="KW-1185">Reference proteome</keyword>
<keyword id="KW-0808">Transferase</keyword>
<proteinExistence type="evidence at protein level"/>
<name>RFBN_SALTY</name>
<protein>
    <recommendedName>
        <fullName evidence="3">O-antigen chain rhamnosyltransferase RfbN</fullName>
        <ecNumber evidence="1">2.4.1.377</ecNumber>
    </recommendedName>
    <alternativeName>
        <fullName evidence="3">dTDP-Rha:alpha-D-Gal-diphosphoundecaprenol alpha-1,3-rhamnosyltransferase</fullName>
    </alternativeName>
</protein>
<comment type="function">
    <text evidence="1">Rhamnosyltransferase involved in the biosynthesis of the repeat unit of the lipopolysaccharide (LPS) O-antigen region (PubMed:7684736). Catalyzes the addition of a rhamnose to the galactosyl-undecaprenyl diphosphate intermediate (PubMed:7684736).</text>
</comment>
<comment type="catalytic activity">
    <reaction evidence="1">
        <text>alpha-D-galactosyl-di-trans,octa-cis-undecaprenyl diphosphate + dTDP-beta-L-rhamnose = alpha-L-rhamnosyl-(1-&gt;3)-alpha-D-galactosyl-1-diphospho-di-trans,octa-cis-undecaprenol + dTDP + H(+)</text>
        <dbReference type="Rhea" id="RHEA:66952"/>
        <dbReference type="ChEBI" id="CHEBI:15378"/>
        <dbReference type="ChEBI" id="CHEBI:57510"/>
        <dbReference type="ChEBI" id="CHEBI:58369"/>
        <dbReference type="ChEBI" id="CHEBI:138733"/>
        <dbReference type="ChEBI" id="CHEBI:167467"/>
        <dbReference type="EC" id="2.4.1.377"/>
    </reaction>
    <physiologicalReaction direction="left-to-right" evidence="1">
        <dbReference type="Rhea" id="RHEA:66953"/>
    </physiologicalReaction>
</comment>
<comment type="pathway">
    <text evidence="1">Bacterial outer membrane biogenesis; LPS O-antigen biosynthesis.</text>
</comment>
<comment type="similarity">
    <text evidence="3">Belongs to the glycosyltransferase 2 family.</text>
</comment>
<organism>
    <name type="scientific">Salmonella typhimurium (strain LT2 / SGSC1412 / ATCC 700720)</name>
    <dbReference type="NCBI Taxonomy" id="99287"/>
    <lineage>
        <taxon>Bacteria</taxon>
        <taxon>Pseudomonadati</taxon>
        <taxon>Pseudomonadota</taxon>
        <taxon>Gammaproteobacteria</taxon>
        <taxon>Enterobacterales</taxon>
        <taxon>Enterobacteriaceae</taxon>
        <taxon>Salmonella</taxon>
    </lineage>
</organism>
<accession>P26403</accession>
<evidence type="ECO:0000269" key="1">
    <source>
    </source>
</evidence>
<evidence type="ECO:0000303" key="2">
    <source>
    </source>
</evidence>
<evidence type="ECO:0000305" key="3"/>
<evidence type="ECO:0000312" key="4">
    <source>
        <dbReference type="EMBL" id="AAL20989.1"/>
    </source>
</evidence>
<dbReference type="EC" id="2.4.1.377" evidence="1"/>
<dbReference type="EMBL" id="X56793">
    <property type="protein sequence ID" value="CAA40127.1"/>
    <property type="molecule type" value="Genomic_DNA"/>
</dbReference>
<dbReference type="EMBL" id="AE006468">
    <property type="protein sequence ID" value="AAL20989.1"/>
    <property type="molecule type" value="Genomic_DNA"/>
</dbReference>
<dbReference type="PIR" id="S15311">
    <property type="entry name" value="S15311"/>
</dbReference>
<dbReference type="RefSeq" id="NP_461030.1">
    <property type="nucleotide sequence ID" value="NC_003197.2"/>
</dbReference>
<dbReference type="RefSeq" id="WP_000705151.1">
    <property type="nucleotide sequence ID" value="NC_003197.2"/>
</dbReference>
<dbReference type="SMR" id="P26403"/>
<dbReference type="STRING" id="99287.STM2085"/>
<dbReference type="CAZy" id="GT2">
    <property type="family name" value="Glycosyltransferase Family 2"/>
</dbReference>
<dbReference type="PaxDb" id="99287-STM2085"/>
<dbReference type="GeneID" id="1253606"/>
<dbReference type="KEGG" id="stm:STM2085"/>
<dbReference type="PATRIC" id="fig|99287.12.peg.2207"/>
<dbReference type="HOGENOM" id="CLU_061778_1_0_6"/>
<dbReference type="OMA" id="ARRFNYP"/>
<dbReference type="PhylomeDB" id="P26403"/>
<dbReference type="BioCyc" id="MetaCyc:STM2085-MONOMER"/>
<dbReference type="BioCyc" id="SENT99287:STM2085-MONOMER"/>
<dbReference type="BRENDA" id="2.4.1.377">
    <property type="organism ID" value="5542"/>
</dbReference>
<dbReference type="UniPathway" id="UPA00281"/>
<dbReference type="Proteomes" id="UP000001014">
    <property type="component" value="Chromosome"/>
</dbReference>
<dbReference type="GO" id="GO:0016757">
    <property type="term" value="F:glycosyltransferase activity"/>
    <property type="evidence" value="ECO:0007669"/>
    <property type="project" value="UniProtKB-KW"/>
</dbReference>
<dbReference type="GO" id="GO:0009243">
    <property type="term" value="P:O antigen biosynthetic process"/>
    <property type="evidence" value="ECO:0007669"/>
    <property type="project" value="UniProtKB-UniPathway"/>
</dbReference>
<dbReference type="GO" id="GO:0000271">
    <property type="term" value="P:polysaccharide biosynthetic process"/>
    <property type="evidence" value="ECO:0000318"/>
    <property type="project" value="GO_Central"/>
</dbReference>
<dbReference type="GO" id="GO:0044010">
    <property type="term" value="P:single-species biofilm formation"/>
    <property type="evidence" value="ECO:0000318"/>
    <property type="project" value="GO_Central"/>
</dbReference>
<dbReference type="FunFam" id="3.90.550.10:FF:000151">
    <property type="entry name" value="O antigen biosynthesis rhamnosyltransferase"/>
    <property type="match status" value="1"/>
</dbReference>
<dbReference type="Gene3D" id="3.90.550.10">
    <property type="entry name" value="Spore Coat Polysaccharide Biosynthesis Protein SpsA, Chain A"/>
    <property type="match status" value="1"/>
</dbReference>
<dbReference type="InterPro" id="IPR001173">
    <property type="entry name" value="Glyco_trans_2-like"/>
</dbReference>
<dbReference type="InterPro" id="IPR050834">
    <property type="entry name" value="Glycosyltransf_2"/>
</dbReference>
<dbReference type="InterPro" id="IPR029044">
    <property type="entry name" value="Nucleotide-diphossugar_trans"/>
</dbReference>
<dbReference type="PANTHER" id="PTHR43685">
    <property type="entry name" value="GLYCOSYLTRANSFERASE"/>
    <property type="match status" value="1"/>
</dbReference>
<dbReference type="PANTHER" id="PTHR43685:SF13">
    <property type="entry name" value="O ANTIGEN BIOSYNTHESIS RHAMNOSYLTRANSFERASE RFBN"/>
    <property type="match status" value="1"/>
</dbReference>
<dbReference type="Pfam" id="PF00535">
    <property type="entry name" value="Glycos_transf_2"/>
    <property type="match status" value="1"/>
</dbReference>
<dbReference type="SUPFAM" id="SSF53448">
    <property type="entry name" value="Nucleotide-diphospho-sugar transferases"/>
    <property type="match status" value="1"/>
</dbReference>
<reference key="1">
    <citation type="journal article" date="1991" name="Mol. Microbiol.">
        <title>Structure and sequence of the rfb (O antigen) gene cluster of Salmonella serovar typhimurium (strain LT2).</title>
        <authorList>
            <person name="Jiang X.-M."/>
            <person name="Neal B."/>
            <person name="Santiago F."/>
            <person name="Lee S.J."/>
            <person name="Romana L.K."/>
            <person name="Reeves P.R."/>
        </authorList>
    </citation>
    <scope>NUCLEOTIDE SEQUENCE [GENOMIC DNA]</scope>
    <source>
        <strain>LT2</strain>
    </source>
</reference>
<reference key="2">
    <citation type="journal article" date="2001" name="Nature">
        <title>Complete genome sequence of Salmonella enterica serovar Typhimurium LT2.</title>
        <authorList>
            <person name="McClelland M."/>
            <person name="Sanderson K.E."/>
            <person name="Spieth J."/>
            <person name="Clifton S.W."/>
            <person name="Latreille P."/>
            <person name="Courtney L."/>
            <person name="Porwollik S."/>
            <person name="Ali J."/>
            <person name="Dante M."/>
            <person name="Du F."/>
            <person name="Hou S."/>
            <person name="Layman D."/>
            <person name="Leonard S."/>
            <person name="Nguyen C."/>
            <person name="Scott K."/>
            <person name="Holmes A."/>
            <person name="Grewal N."/>
            <person name="Mulvaney E."/>
            <person name="Ryan E."/>
            <person name="Sun H."/>
            <person name="Florea L."/>
            <person name="Miller W."/>
            <person name="Stoneking T."/>
            <person name="Nhan M."/>
            <person name="Waterston R."/>
            <person name="Wilson R.K."/>
        </authorList>
    </citation>
    <scope>NUCLEOTIDE SEQUENCE [LARGE SCALE GENOMIC DNA]</scope>
    <source>
        <strain>LT2 / SGSC1412 / ATCC 700720</strain>
    </source>
</reference>
<reference key="3">
    <citation type="journal article" date="1993" name="J. Bacteriol.">
        <title>Glycosyl transferases of O-antigen biosynthesis in Salmonella enterica: identification and characterization of transferase genes of groups B, C2, and E1.</title>
        <authorList>
            <person name="Liu D."/>
            <person name="Haase A.M."/>
            <person name="Lindqvist L."/>
            <person name="Lindberg A.A."/>
            <person name="Reeves P.R."/>
        </authorList>
    </citation>
    <scope>FUNCTION</scope>
    <scope>CATALYTIC ACTIVITY</scope>
    <scope>PATHWAY</scope>
    <source>
        <strain>LT2</strain>
    </source>
</reference>
<feature type="chain" id="PRO_0000059217" description="O-antigen chain rhamnosyltransferase RfbN">
    <location>
        <begin position="1"/>
        <end position="314"/>
    </location>
</feature>